<evidence type="ECO:0000250" key="1">
    <source>
        <dbReference type="UniProtKB" id="Q5PR66"/>
    </source>
</evidence>
<evidence type="ECO:0000255" key="2"/>
<evidence type="ECO:0000269" key="3">
    <source>
    </source>
</evidence>
<evidence type="ECO:0000269" key="4">
    <source>
    </source>
</evidence>
<evidence type="ECO:0000303" key="5">
    <source>
    </source>
</evidence>
<evidence type="ECO:0000305" key="6"/>
<evidence type="ECO:0000305" key="7">
    <source>
    </source>
</evidence>
<evidence type="ECO:0000312" key="8">
    <source>
        <dbReference type="WormBase" id="C27H5.7a"/>
    </source>
</evidence>
<comment type="function">
    <text evidence="4 7">Component of the intraflagellar transport (IFT) complex B required for transport of proteins in the motile cilium (PubMed:15916950, PubMed:28479320). May be required for ciliary entrance and transport of specific ciliary cargo proteins such as che-3 which are related to motility (PubMed:28479320).</text>
</comment>
<comment type="subunit">
    <text evidence="4">Component of the IFT complex B composed of at least che-2, che-13, dyf-1, dyf-3, dyf-6, dyf-11, dyf-13, ift-20, ift-74, ift-81, ifta-2, osm-1, osm-5 and osm-6.</text>
</comment>
<comment type="subcellular location">
    <subcellularLocation>
        <location evidence="1">Cell projection</location>
        <location evidence="1">Cilium</location>
    </subcellularLocation>
</comment>
<comment type="alternative products">
    <event type="alternative splicing"/>
    <isoform>
        <id>Q95QT8-1</id>
        <name>1</name>
        <sequence type="displayed"/>
    </isoform>
    <isoform>
        <id>Q95QT8-2</id>
        <name>b</name>
        <sequence type="described" ref="VSP_057361"/>
    </isoform>
</comment>
<comment type="disruption phenotype">
    <text evidence="3">Structural cilia defect: cilia are short and lack distal portions.</text>
</comment>
<comment type="similarity">
    <text evidence="6">Belongs to the IFT56 family.</text>
</comment>
<name>IFT56_CAEEL</name>
<sequence length="574" mass="66194">MLNLFRNRKRNGAGPTIKKAQKMPELDDFLSNQDYEGAISLLNHKLKAGNLDREEEDSLQLWLAHCYYRLRNYEEAANVYTFLMNKDDAPAELGVYLACCKFYLKQYIEAKSIAEKCPKTPLCIRLMMNVSLRLNDEKRILTFHSSLGDTLEDRLSLAGVNYSRMHYQDAIEVYTSVLQTSPNLIGLNVNMALCYAKMDYPHVAYNLIKNYLRNFPNSPFAKNLLLSVLYRTITSKTTVDEKSELARNIDQEGLTMVSDMEALLKQKLYPEIEYICKHNLVLFKNCETALQVLPSLMKHIPEARVNLILYHLNKNNVKDAISLCKDFDPVTPYEFLVKALTFLRHGQETNSREHLKIAENFFQMVGESGLVQDTIAGRQSSAAYLFLSFKFDDVITYLKSIEAYFTNNDDFLLNLAQAYLMYKNYVAAEKLFIRVSGPERDKILYKSMLARCYVRNKKPQSAWDMMLKTNNPSDRMSLLKVIAQDCYIANEFYYASKAFHEIEISDPTTENWSGKRGACAGLFRQLANHKTDPILISQMREVVHLVAMKPHSNCEFLLKVVRNWAETHNVNIIN</sequence>
<protein>
    <recommendedName>
        <fullName evidence="1">Intraflagellar transport protein 56 homolog</fullName>
    </recommendedName>
    <alternativeName>
        <fullName evidence="5">Abnormal dye filling protein 13</fullName>
    </alternativeName>
</protein>
<gene>
    <name evidence="5 8" type="primary">dyf-13</name>
    <name evidence="8" type="ORF">C27H5.7</name>
</gene>
<proteinExistence type="evidence at protein level"/>
<dbReference type="EMBL" id="FO080695">
    <property type="protein sequence ID" value="CCD65894.1"/>
    <property type="molecule type" value="Genomic_DNA"/>
</dbReference>
<dbReference type="EMBL" id="FO080695">
    <property type="protein sequence ID" value="CCD65895.1"/>
    <property type="molecule type" value="Genomic_DNA"/>
</dbReference>
<dbReference type="RefSeq" id="NP_741021.1">
    <molecule id="Q95QT8-1"/>
    <property type="nucleotide sequence ID" value="NM_171019.3"/>
</dbReference>
<dbReference type="RefSeq" id="NP_741022.1">
    <molecule id="Q95QT8-2"/>
    <property type="nucleotide sequence ID" value="NM_171020.6"/>
</dbReference>
<dbReference type="SMR" id="Q95QT8"/>
<dbReference type="ComplexPortal" id="CPX-1290">
    <property type="entry name" value="Intraflagellar transport complex B"/>
</dbReference>
<dbReference type="FunCoup" id="Q95QT8">
    <property type="interactions" value="439"/>
</dbReference>
<dbReference type="STRING" id="6239.C27H5.7a.1"/>
<dbReference type="PaxDb" id="6239-C27H5.7a"/>
<dbReference type="EnsemblMetazoa" id="C27H5.7a.1">
    <molecule id="Q95QT8-1"/>
    <property type="protein sequence ID" value="C27H5.7a.1"/>
    <property type="gene ID" value="WBGene00001129"/>
</dbReference>
<dbReference type="EnsemblMetazoa" id="C27H5.7b.1">
    <molecule id="Q95QT8-2"/>
    <property type="protein sequence ID" value="C27H5.7b.1"/>
    <property type="gene ID" value="WBGene00001129"/>
</dbReference>
<dbReference type="GeneID" id="182970"/>
<dbReference type="KEGG" id="cel:CELE_C27H5.7"/>
<dbReference type="UCSC" id="C27H5.7b.1">
    <property type="organism name" value="c. elegans"/>
</dbReference>
<dbReference type="AGR" id="WB:WBGene00001129"/>
<dbReference type="CTD" id="182970"/>
<dbReference type="WormBase" id="C27H5.7a">
    <molecule id="Q95QT8-1"/>
    <property type="protein sequence ID" value="CE06894"/>
    <property type="gene ID" value="WBGene00001129"/>
    <property type="gene designation" value="dyf-13"/>
</dbReference>
<dbReference type="WormBase" id="C27H5.7b">
    <molecule id="Q95QT8-2"/>
    <property type="protein sequence ID" value="CE31320"/>
    <property type="gene ID" value="WBGene00001129"/>
    <property type="gene designation" value="dyf-13"/>
</dbReference>
<dbReference type="eggNOG" id="KOG3785">
    <property type="taxonomic scope" value="Eukaryota"/>
</dbReference>
<dbReference type="GeneTree" id="ENSGT00390000000159"/>
<dbReference type="InParanoid" id="Q95QT8"/>
<dbReference type="OMA" id="FIIRRDY"/>
<dbReference type="OrthoDB" id="95390at2759"/>
<dbReference type="PhylomeDB" id="Q95QT8"/>
<dbReference type="Reactome" id="R-CEL-5620924">
    <property type="pathway name" value="Intraflagellar transport"/>
</dbReference>
<dbReference type="PRO" id="PR:Q95QT8"/>
<dbReference type="Proteomes" id="UP000001940">
    <property type="component" value="Chromosome II"/>
</dbReference>
<dbReference type="Bgee" id="WBGene00001129">
    <property type="expression patterns" value="Expressed in pharyngeal muscle cell (C elegans) and 3 other cell types or tissues"/>
</dbReference>
<dbReference type="GO" id="GO:0036064">
    <property type="term" value="C:ciliary basal body"/>
    <property type="evidence" value="ECO:0000318"/>
    <property type="project" value="GO_Central"/>
</dbReference>
<dbReference type="GO" id="GO:0097546">
    <property type="term" value="C:ciliary base"/>
    <property type="evidence" value="ECO:0000318"/>
    <property type="project" value="GO_Central"/>
</dbReference>
<dbReference type="GO" id="GO:0005929">
    <property type="term" value="C:cilium"/>
    <property type="evidence" value="ECO:0000303"/>
    <property type="project" value="ComplexPortal"/>
</dbReference>
<dbReference type="GO" id="GO:0030992">
    <property type="term" value="C:intraciliary transport particle B"/>
    <property type="evidence" value="ECO:0000318"/>
    <property type="project" value="GO_Central"/>
</dbReference>
<dbReference type="GO" id="GO:0120170">
    <property type="term" value="F:intraciliary transport particle B binding"/>
    <property type="evidence" value="ECO:0000318"/>
    <property type="project" value="GO_Central"/>
</dbReference>
<dbReference type="GO" id="GO:0060271">
    <property type="term" value="P:cilium assembly"/>
    <property type="evidence" value="ECO:0000303"/>
    <property type="project" value="ComplexPortal"/>
</dbReference>
<dbReference type="GO" id="GO:0035720">
    <property type="term" value="P:intraciliary anterograde transport"/>
    <property type="evidence" value="ECO:0000318"/>
    <property type="project" value="GO_Central"/>
</dbReference>
<dbReference type="GO" id="GO:0042073">
    <property type="term" value="P:intraciliary transport"/>
    <property type="evidence" value="ECO:0000303"/>
    <property type="project" value="ComplexPortal"/>
</dbReference>
<dbReference type="GO" id="GO:0035735">
    <property type="term" value="P:intraciliary transport involved in cilium assembly"/>
    <property type="evidence" value="ECO:0000318"/>
    <property type="project" value="GO_Central"/>
</dbReference>
<dbReference type="GO" id="GO:0015031">
    <property type="term" value="P:protein transport"/>
    <property type="evidence" value="ECO:0007669"/>
    <property type="project" value="UniProtKB-KW"/>
</dbReference>
<dbReference type="FunFam" id="1.25.40.10:FF:002794">
    <property type="entry name" value="Intraflagellar transport protein 56 homolog"/>
    <property type="match status" value="1"/>
</dbReference>
<dbReference type="Gene3D" id="1.25.40.10">
    <property type="entry name" value="Tetratricopeptide repeat domain"/>
    <property type="match status" value="3"/>
</dbReference>
<dbReference type="InterPro" id="IPR011990">
    <property type="entry name" value="TPR-like_helical_dom_sf"/>
</dbReference>
<dbReference type="InterPro" id="IPR030511">
    <property type="entry name" value="TTC26"/>
</dbReference>
<dbReference type="PANTHER" id="PTHR14781">
    <property type="entry name" value="INTRAFLAGELLAR TRANSPORT PROTEIN 56"/>
    <property type="match status" value="1"/>
</dbReference>
<dbReference type="PANTHER" id="PTHR14781:SF0">
    <property type="entry name" value="INTRAFLAGELLAR TRANSPORT PROTEIN 56"/>
    <property type="match status" value="1"/>
</dbReference>
<dbReference type="Pfam" id="PF14559">
    <property type="entry name" value="TPR_19"/>
    <property type="match status" value="1"/>
</dbReference>
<dbReference type="SUPFAM" id="SSF48452">
    <property type="entry name" value="TPR-like"/>
    <property type="match status" value="2"/>
</dbReference>
<dbReference type="PROSITE" id="PS50293">
    <property type="entry name" value="TPR_REGION"/>
    <property type="match status" value="1"/>
</dbReference>
<feature type="chain" id="PRO_0000431683" description="Intraflagellar transport protein 56 homolog">
    <location>
        <begin position="1"/>
        <end position="574"/>
    </location>
</feature>
<feature type="repeat" description="TPR 1" evidence="2">
    <location>
        <begin position="20"/>
        <end position="52"/>
    </location>
</feature>
<feature type="repeat" description="TPR 2" evidence="2">
    <location>
        <begin position="57"/>
        <end position="90"/>
    </location>
</feature>
<feature type="repeat" description="TPR 3" evidence="2">
    <location>
        <begin position="151"/>
        <end position="184"/>
    </location>
</feature>
<feature type="splice variant" id="VSP_057361" description="In isoform b.">
    <location>
        <begin position="1"/>
        <end position="22"/>
    </location>
</feature>
<keyword id="KW-0025">Alternative splicing</keyword>
<keyword id="KW-0966">Cell projection</keyword>
<keyword id="KW-0653">Protein transport</keyword>
<keyword id="KW-1185">Reference proteome</keyword>
<keyword id="KW-0677">Repeat</keyword>
<keyword id="KW-0802">TPR repeat</keyword>
<keyword id="KW-0813">Transport</keyword>
<accession>Q95QT8</accession>
<accession>Q8MQB6</accession>
<organism>
    <name type="scientific">Caenorhabditis elegans</name>
    <dbReference type="NCBI Taxonomy" id="6239"/>
    <lineage>
        <taxon>Eukaryota</taxon>
        <taxon>Metazoa</taxon>
        <taxon>Ecdysozoa</taxon>
        <taxon>Nematoda</taxon>
        <taxon>Chromadorea</taxon>
        <taxon>Rhabditida</taxon>
        <taxon>Rhabditina</taxon>
        <taxon>Rhabditomorpha</taxon>
        <taxon>Rhabditoidea</taxon>
        <taxon>Rhabditidae</taxon>
        <taxon>Peloderinae</taxon>
        <taxon>Caenorhabditis</taxon>
    </lineage>
</organism>
<reference key="1">
    <citation type="journal article" date="1998" name="Science">
        <title>Genome sequence of the nematode C. elegans: a platform for investigating biology.</title>
        <authorList>
            <consortium name="The C. elegans sequencing consortium"/>
        </authorList>
    </citation>
    <scope>NUCLEOTIDE SEQUENCE [LARGE SCALE GENOMIC DNA]</scope>
    <source>
        <strain>Bristol N2</strain>
    </source>
</reference>
<reference key="2">
    <citation type="journal article" date="1995" name="Genetics">
        <title>Mutations affecting the chemosensory neurons of Caenorhabditis elegans.</title>
        <authorList>
            <person name="Starich T.A."/>
            <person name="Herman R.K."/>
            <person name="Kari C.K."/>
            <person name="Yeh W.H."/>
            <person name="Schackwitz W.S."/>
            <person name="Schuyler M.W."/>
            <person name="Collet J."/>
            <person name="Thomas J.H."/>
            <person name="Riddle D.L."/>
        </authorList>
    </citation>
    <scope>GENE NAME</scope>
</reference>
<reference key="3">
    <citation type="journal article" date="2005" name="Curr. Biol.">
        <title>Functional genomics of the cilium, a sensory organelle.</title>
        <authorList>
            <person name="Blacque O.E."/>
            <person name="Perens E.A."/>
            <person name="Boroevich K.A."/>
            <person name="Inglis P.N."/>
            <person name="Li C."/>
            <person name="Warner A."/>
            <person name="Khattra J."/>
            <person name="Holt R.A."/>
            <person name="Ou G."/>
            <person name="Mah A.K."/>
            <person name="McKay S.J."/>
            <person name="Huang P."/>
            <person name="Swoboda P."/>
            <person name="Jones S.J.M."/>
            <person name="Marra M.A."/>
            <person name="Baillie D.L."/>
            <person name="Moerman D.G."/>
            <person name="Shaham S."/>
            <person name="Leroux M.R."/>
        </authorList>
    </citation>
    <scope>DISRUPTION PHENOTYPE</scope>
    <scope>FUNCTION</scope>
</reference>
<reference key="4">
    <citation type="journal article" date="2017" name="Curr. Biol.">
        <title>Dynein-driven retrograde intraflagellar transport is triphasic in C. elegans sensory cilia.</title>
        <authorList>
            <person name="Yi P."/>
            <person name="Li W.J."/>
            <person name="Dong M.Q."/>
            <person name="Ou G."/>
        </authorList>
    </citation>
    <scope>FUNCTION</scope>
    <scope>IDENTIFICATION IN IFT COMPLEX B</scope>
    <scope>IDENTIFICATION BY MASS SPECTROMETRY</scope>
</reference>